<proteinExistence type="predicted"/>
<reference key="1">
    <citation type="journal article" date="1992" name="Appl. Environ. Microbiol.">
        <title>Cloning, expression, and nucleotide sequence of genes involved in production of pediocin PA-1, and bacteriocin from Pediococcus acidilactici PAC1.0.</title>
        <authorList>
            <person name="Marugg J.D."/>
            <person name="Gonzalez C.F."/>
            <person name="Kunka B.S."/>
            <person name="Ledeboer A.M."/>
            <person name="Pucci M.J."/>
            <person name="Toonen M.Y."/>
            <person name="Walker S.A."/>
            <person name="Zoetmulder L.C.M."/>
            <person name="Vandenbergh P.A."/>
        </authorList>
    </citation>
    <scope>NUCLEOTIDE SEQUENCE [GENOMIC DNA]</scope>
    <source>
        <strain>PAC-1.0</strain>
        <plasmid>pSRQ11</plasmid>
    </source>
</reference>
<reference key="2">
    <citation type="journal article" date="1994" name="Lett. Appl. Microbiol.">
        <title>Complete nucleotide sequence of pSMB 74, a plasmid encoding the production of pediocin AcH in Pediococcus acidilactici.</title>
        <authorList>
            <person name="Motlagh A.M."/>
            <person name="Bukhtiyarova M.B."/>
            <person name="Ray B.R."/>
        </authorList>
    </citation>
    <scope>NUCLEOTIDE SEQUENCE [GENOMIC DNA]</scope>
    <source>
        <strain>H</strain>
        <plasmid>pSMB74</plasmid>
    </source>
</reference>
<geneLocation type="plasmid">
    <name>pSRQ11</name>
</geneLocation>
<geneLocation type="plasmid">
    <name>pSMB74</name>
</geneLocation>
<dbReference type="EMBL" id="M83924">
    <property type="status" value="NOT_ANNOTATED_CDS"/>
    <property type="molecule type" value="Genomic_DNA"/>
</dbReference>
<dbReference type="EMBL" id="U02482">
    <property type="protein sequence ID" value="AAC43295.1"/>
    <property type="molecule type" value="Genomic_DNA"/>
</dbReference>
<dbReference type="PIR" id="C48941">
    <property type="entry name" value="C48941"/>
</dbReference>
<dbReference type="RefSeq" id="NP_857604.1">
    <property type="nucleotide sequence ID" value="NC_004832.1"/>
</dbReference>
<dbReference type="RefSeq" id="WP_005918571.1">
    <property type="nucleotide sequence ID" value="NZ_VCYC01000012.1"/>
</dbReference>
<dbReference type="SMR" id="P37249"/>
<dbReference type="TCDB" id="8.A.12.1.2">
    <property type="family name" value="the abc bacteriocin exporter accessory protein (bea) family"/>
</dbReference>
<dbReference type="GO" id="GO:0030152">
    <property type="term" value="P:bacteriocin biosynthetic process"/>
    <property type="evidence" value="ECO:0007669"/>
    <property type="project" value="UniProtKB-KW"/>
</dbReference>
<dbReference type="CDD" id="cd02947">
    <property type="entry name" value="TRX_family"/>
    <property type="match status" value="1"/>
</dbReference>
<dbReference type="Gene3D" id="3.40.30.10">
    <property type="entry name" value="Glutaredoxin"/>
    <property type="match status" value="1"/>
</dbReference>
<dbReference type="InterPro" id="IPR005985">
    <property type="entry name" value="PedC_BrcD"/>
</dbReference>
<dbReference type="InterPro" id="IPR036249">
    <property type="entry name" value="Thioredoxin-like_sf"/>
</dbReference>
<dbReference type="NCBIfam" id="TIGR01295">
    <property type="entry name" value="PedC_BrcD"/>
    <property type="match status" value="1"/>
</dbReference>
<dbReference type="SUPFAM" id="SSF52833">
    <property type="entry name" value="Thioredoxin-like"/>
    <property type="match status" value="1"/>
</dbReference>
<feature type="chain" id="PRO_0000058303" description="Pediocin PA-1 biosynthesis protein PedC">
    <location>
        <begin position="1"/>
        <end position="174"/>
    </location>
</feature>
<sequence length="174" mass="19194">MSKKFWSNIFLALGVFLAFAGVATISVSADSSATIESNTSSKIIDGATYEENIRGVIPITLTQYLHKAQTGEKFIVFVGFKECVHCRKFSPVMKQYLQQSQHPIYYLDYGNNGSFSMASQKQITDFYSTFATPMSFMGTPTVALLDNGKVVSMTAGDDTTLSDLQQITADYNNQ</sequence>
<organism>
    <name type="scientific">Pediococcus acidilactici</name>
    <dbReference type="NCBI Taxonomy" id="1254"/>
    <lineage>
        <taxon>Bacteria</taxon>
        <taxon>Bacillati</taxon>
        <taxon>Bacillota</taxon>
        <taxon>Bacilli</taxon>
        <taxon>Lactobacillales</taxon>
        <taxon>Lactobacillaceae</taxon>
        <taxon>Pediococcus</taxon>
        <taxon>Pediococcus acidilactici group</taxon>
    </lineage>
</organism>
<gene>
    <name type="primary">pedC</name>
    <name type="synonym">papC</name>
</gene>
<accession>P37249</accession>
<comment type="function">
    <text>Probably involved in pediocin PA-1 biosynthesis.</text>
</comment>
<keyword id="KW-0045">Antibiotic biosynthesis</keyword>
<keyword id="KW-0871">Bacteriocin biosynthesis</keyword>
<keyword id="KW-0614">Plasmid</keyword>
<protein>
    <recommendedName>
        <fullName>Pediocin PA-1 biosynthesis protein PedC</fullName>
    </recommendedName>
    <alternativeName>
        <fullName>Pediocin ACH biosynthesis protein PapC</fullName>
    </alternativeName>
</protein>
<name>PEDC_PEDAC</name>